<keyword id="KW-0007">Acetylation</keyword>
<keyword id="KW-0067">ATP-binding</keyword>
<keyword id="KW-0963">Cytoplasm</keyword>
<keyword id="KW-0206">Cytoskeleton</keyword>
<keyword id="KW-0413">Isomerase</keyword>
<keyword id="KW-0493">Microtubule</keyword>
<keyword id="KW-0547">Nucleotide-binding</keyword>
<keyword id="KW-0597">Phosphoprotein</keyword>
<keyword id="KW-1185">Reference proteome</keyword>
<accession>A9RA82</accession>
<dbReference type="EC" id="5.6.1.1" evidence="4"/>
<dbReference type="EMBL" id="DP000511">
    <property type="protein sequence ID" value="ABX89264.1"/>
    <property type="molecule type" value="Genomic_DNA"/>
</dbReference>
<dbReference type="RefSeq" id="NP_001162539.1">
    <property type="nucleotide sequence ID" value="NM_001169068.1"/>
</dbReference>
<dbReference type="RefSeq" id="XP_021785039.1">
    <property type="nucleotide sequence ID" value="XM_021929347.2"/>
</dbReference>
<dbReference type="RefSeq" id="XP_021785040.1">
    <property type="nucleotide sequence ID" value="XM_021929348.2"/>
</dbReference>
<dbReference type="RefSeq" id="XP_021785042.1">
    <property type="nucleotide sequence ID" value="XM_021929350.2"/>
</dbReference>
<dbReference type="SMR" id="A9RA82"/>
<dbReference type="STRING" id="9555.ENSPANP00000009005"/>
<dbReference type="Ensembl" id="ENSPANT00000078021.1">
    <property type="protein sequence ID" value="ENSPANP00000051502.1"/>
    <property type="gene ID" value="ENSPANG00000023364.3"/>
</dbReference>
<dbReference type="GeneID" id="100137574"/>
<dbReference type="KEGG" id="panu:100137574"/>
<dbReference type="CTD" id="84056"/>
<dbReference type="eggNOG" id="KOG0738">
    <property type="taxonomic scope" value="Eukaryota"/>
</dbReference>
<dbReference type="GeneTree" id="ENSGT00940000156630"/>
<dbReference type="OMA" id="TAKMMPV"/>
<dbReference type="Proteomes" id="UP000028761">
    <property type="component" value="Chromosome 15"/>
</dbReference>
<dbReference type="GO" id="GO:0005813">
    <property type="term" value="C:centrosome"/>
    <property type="evidence" value="ECO:0007669"/>
    <property type="project" value="UniProtKB-UniRule"/>
</dbReference>
<dbReference type="GO" id="GO:0005737">
    <property type="term" value="C:cytoplasm"/>
    <property type="evidence" value="ECO:0000250"/>
    <property type="project" value="UniProtKB"/>
</dbReference>
<dbReference type="GO" id="GO:0005829">
    <property type="term" value="C:cytosol"/>
    <property type="evidence" value="ECO:0007669"/>
    <property type="project" value="Ensembl"/>
</dbReference>
<dbReference type="GO" id="GO:0008352">
    <property type="term" value="C:katanin complex"/>
    <property type="evidence" value="ECO:0007669"/>
    <property type="project" value="Ensembl"/>
</dbReference>
<dbReference type="GO" id="GO:0005874">
    <property type="term" value="C:microtubule"/>
    <property type="evidence" value="ECO:0000250"/>
    <property type="project" value="UniProtKB"/>
</dbReference>
<dbReference type="GO" id="GO:0005739">
    <property type="term" value="C:mitochondrion"/>
    <property type="evidence" value="ECO:0007669"/>
    <property type="project" value="Ensembl"/>
</dbReference>
<dbReference type="GO" id="GO:0072686">
    <property type="term" value="C:mitotic spindle"/>
    <property type="evidence" value="ECO:0007669"/>
    <property type="project" value="Ensembl"/>
</dbReference>
<dbReference type="GO" id="GO:0005819">
    <property type="term" value="C:spindle"/>
    <property type="evidence" value="ECO:0000250"/>
    <property type="project" value="UniProtKB"/>
</dbReference>
<dbReference type="GO" id="GO:0000922">
    <property type="term" value="C:spindle pole"/>
    <property type="evidence" value="ECO:0000250"/>
    <property type="project" value="UniProtKB"/>
</dbReference>
<dbReference type="GO" id="GO:0005524">
    <property type="term" value="F:ATP binding"/>
    <property type="evidence" value="ECO:0007669"/>
    <property type="project" value="UniProtKB-KW"/>
</dbReference>
<dbReference type="GO" id="GO:0016887">
    <property type="term" value="F:ATP hydrolysis activity"/>
    <property type="evidence" value="ECO:0007669"/>
    <property type="project" value="InterPro"/>
</dbReference>
<dbReference type="GO" id="GO:0042802">
    <property type="term" value="F:identical protein binding"/>
    <property type="evidence" value="ECO:0007669"/>
    <property type="project" value="Ensembl"/>
</dbReference>
<dbReference type="GO" id="GO:0008017">
    <property type="term" value="F:microtubule binding"/>
    <property type="evidence" value="ECO:0007669"/>
    <property type="project" value="UniProtKB-UniRule"/>
</dbReference>
<dbReference type="GO" id="GO:0008568">
    <property type="term" value="F:microtubule severing ATPase activity"/>
    <property type="evidence" value="ECO:0000250"/>
    <property type="project" value="UniProtKB"/>
</dbReference>
<dbReference type="GO" id="GO:0051013">
    <property type="term" value="P:microtubule severing"/>
    <property type="evidence" value="ECO:0000250"/>
    <property type="project" value="UniProtKB"/>
</dbReference>
<dbReference type="GO" id="GO:0007283">
    <property type="term" value="P:spermatogenesis"/>
    <property type="evidence" value="ECO:0007669"/>
    <property type="project" value="UniProtKB-UniRule"/>
</dbReference>
<dbReference type="CDD" id="cd21748">
    <property type="entry name" value="Kp60-NTD"/>
    <property type="match status" value="1"/>
</dbReference>
<dbReference type="CDD" id="cd19522">
    <property type="entry name" value="RecA-like_KTNA1"/>
    <property type="match status" value="1"/>
</dbReference>
<dbReference type="FunFam" id="1.10.8.60:FF:000025">
    <property type="entry name" value="Katanin p60 ATPase-containing subunit A1"/>
    <property type="match status" value="1"/>
</dbReference>
<dbReference type="FunFam" id="1.20.58.80:FF:000003">
    <property type="entry name" value="Katanin p60 ATPase-containing subunit A1"/>
    <property type="match status" value="1"/>
</dbReference>
<dbReference type="FunFam" id="3.40.50.300:FF:000159">
    <property type="entry name" value="Katanin p60 ATPase-containing subunit A1"/>
    <property type="match status" value="1"/>
</dbReference>
<dbReference type="Gene3D" id="1.10.8.60">
    <property type="match status" value="1"/>
</dbReference>
<dbReference type="Gene3D" id="3.40.50.300">
    <property type="entry name" value="P-loop containing nucleotide triphosphate hydrolases"/>
    <property type="match status" value="1"/>
</dbReference>
<dbReference type="Gene3D" id="1.20.58.80">
    <property type="entry name" value="Phosphotransferase system, lactose/cellobiose-type IIA subunit"/>
    <property type="match status" value="1"/>
</dbReference>
<dbReference type="HAMAP" id="MF_03023">
    <property type="entry name" value="Katanin_p60_A1"/>
    <property type="match status" value="1"/>
</dbReference>
<dbReference type="HAMAP" id="MF_03024">
    <property type="entry name" value="Katanin_p60_AL1"/>
    <property type="match status" value="1"/>
</dbReference>
<dbReference type="InterPro" id="IPR003593">
    <property type="entry name" value="AAA+_ATPase"/>
</dbReference>
<dbReference type="InterPro" id="IPR041569">
    <property type="entry name" value="AAA_lid_3"/>
</dbReference>
<dbReference type="InterPro" id="IPR003959">
    <property type="entry name" value="ATPase_AAA_core"/>
</dbReference>
<dbReference type="InterPro" id="IPR003960">
    <property type="entry name" value="ATPase_AAA_CS"/>
</dbReference>
<dbReference type="InterPro" id="IPR028596">
    <property type="entry name" value="KATNA1"/>
</dbReference>
<dbReference type="InterPro" id="IPR048611">
    <property type="entry name" value="KATNA1_MIT"/>
</dbReference>
<dbReference type="InterPro" id="IPR028594">
    <property type="entry name" value="Katnal1_chordates"/>
</dbReference>
<dbReference type="InterPro" id="IPR048612">
    <property type="entry name" value="KTNA1_AAA_dom"/>
</dbReference>
<dbReference type="InterPro" id="IPR050304">
    <property type="entry name" value="MT-severing_AAA_ATPase"/>
</dbReference>
<dbReference type="InterPro" id="IPR027417">
    <property type="entry name" value="P-loop_NTPase"/>
</dbReference>
<dbReference type="InterPro" id="IPR015415">
    <property type="entry name" value="Spast_Vps4_C"/>
</dbReference>
<dbReference type="PANTHER" id="PTHR23074">
    <property type="entry name" value="AAA DOMAIN-CONTAINING"/>
    <property type="match status" value="1"/>
</dbReference>
<dbReference type="PANTHER" id="PTHR23074:SF65">
    <property type="entry name" value="KATANIN P60 ATPASE-CONTAINING SUBUNIT A-LIKE 1"/>
    <property type="match status" value="1"/>
</dbReference>
<dbReference type="Pfam" id="PF00004">
    <property type="entry name" value="AAA"/>
    <property type="match status" value="1"/>
</dbReference>
<dbReference type="Pfam" id="PF17862">
    <property type="entry name" value="AAA_lid_3"/>
    <property type="match status" value="1"/>
</dbReference>
<dbReference type="Pfam" id="PF21126">
    <property type="entry name" value="KATNA1_MIT"/>
    <property type="match status" value="1"/>
</dbReference>
<dbReference type="Pfam" id="PF09336">
    <property type="entry name" value="Vps4_C"/>
    <property type="match status" value="1"/>
</dbReference>
<dbReference type="SMART" id="SM00382">
    <property type="entry name" value="AAA"/>
    <property type="match status" value="1"/>
</dbReference>
<dbReference type="SUPFAM" id="SSF52540">
    <property type="entry name" value="P-loop containing nucleoside triphosphate hydrolases"/>
    <property type="match status" value="1"/>
</dbReference>
<dbReference type="PROSITE" id="PS00674">
    <property type="entry name" value="AAA"/>
    <property type="match status" value="1"/>
</dbReference>
<proteinExistence type="inferred from homology"/>
<protein>
    <recommendedName>
        <fullName evidence="4">Katanin p60 ATPase-containing subunit A-like 1</fullName>
        <shortName evidence="4">Katanin p60 subunit A-like 1</shortName>
        <ecNumber evidence="4">5.6.1.1</ecNumber>
    </recommendedName>
    <alternativeName>
        <fullName evidence="4">p60 katanin-like 1</fullName>
    </alternativeName>
</protein>
<comment type="function">
    <text evidence="2 3">Regulates microtubule dynamics in Sertoli cells, a process that is essential for spermiogenesis and male fertility. Severs microtubules in an ATP-dependent manner, promoting rapid reorganization of cellular microtubule arrays (By similarity). Has microtubule-severing activity in vitro (By similarity).</text>
</comment>
<comment type="catalytic activity">
    <reaction evidence="4">
        <text>n ATP + n H2O + a microtubule = n ADP + n phosphate + (n+1) alpha/beta tubulin heterodimers.</text>
        <dbReference type="EC" id="5.6.1.1"/>
    </reaction>
</comment>
<comment type="subunit">
    <text evidence="3">Interacts with KATNB1 and KATNBL1.</text>
</comment>
<comment type="subcellular location">
    <subcellularLocation>
        <location evidence="4">Cytoplasm</location>
        <location evidence="4">Cytoskeleton</location>
    </subcellularLocation>
    <subcellularLocation>
        <location evidence="3">Cytoplasm</location>
    </subcellularLocation>
    <subcellularLocation>
        <location evidence="3">Cytoplasm</location>
        <location evidence="3">Cytoskeleton</location>
        <location evidence="3">Spindle pole</location>
    </subcellularLocation>
    <subcellularLocation>
        <location evidence="3">Cytoplasm</location>
        <location evidence="3">Cytoskeleton</location>
        <location evidence="3">Spindle</location>
    </subcellularLocation>
    <text evidence="2 3">Colocalizes with microtubules throughout the basal and adluminal compartments of Sertoli cells (By similarity). Localizes within the cytoplasm, partially overlapping with microtubules, in interphase and to the mitotic spindle and spindle poles during mitosis (By similarity).</text>
</comment>
<comment type="similarity">
    <text evidence="4">Belongs to the AAA ATPase family. Katanin p60 subunit A1 subfamily. A-like 1 sub-subfamily.</text>
</comment>
<name>KATL1_PAPAN</name>
<evidence type="ECO:0000250" key="1">
    <source>
        <dbReference type="UniProtKB" id="Q5XIK7"/>
    </source>
</evidence>
<evidence type="ECO:0000250" key="2">
    <source>
        <dbReference type="UniProtKB" id="Q8K0T4"/>
    </source>
</evidence>
<evidence type="ECO:0000250" key="3">
    <source>
        <dbReference type="UniProtKB" id="Q9BW62"/>
    </source>
</evidence>
<evidence type="ECO:0000255" key="4">
    <source>
        <dbReference type="HAMAP-Rule" id="MF_03024"/>
    </source>
</evidence>
<evidence type="ECO:0000256" key="5">
    <source>
        <dbReference type="SAM" id="MobiDB-lite"/>
    </source>
</evidence>
<organism>
    <name type="scientific">Papio anubis</name>
    <name type="common">Olive baboon</name>
    <dbReference type="NCBI Taxonomy" id="9555"/>
    <lineage>
        <taxon>Eukaryota</taxon>
        <taxon>Metazoa</taxon>
        <taxon>Chordata</taxon>
        <taxon>Craniata</taxon>
        <taxon>Vertebrata</taxon>
        <taxon>Euteleostomi</taxon>
        <taxon>Mammalia</taxon>
        <taxon>Eutheria</taxon>
        <taxon>Euarchontoglires</taxon>
        <taxon>Primates</taxon>
        <taxon>Haplorrhini</taxon>
        <taxon>Catarrhini</taxon>
        <taxon>Cercopithecidae</taxon>
        <taxon>Cercopithecinae</taxon>
        <taxon>Papio</taxon>
    </lineage>
</organism>
<gene>
    <name evidence="4" type="primary">KATNAL1</name>
</gene>
<feature type="chain" id="PRO_0000367124" description="Katanin p60 ATPase-containing subunit A-like 1">
    <location>
        <begin position="1"/>
        <end position="490"/>
    </location>
</feature>
<feature type="region of interest" description="Disordered" evidence="5">
    <location>
        <begin position="95"/>
        <end position="184"/>
    </location>
</feature>
<feature type="compositionally biased region" description="Basic and acidic residues" evidence="5">
    <location>
        <begin position="116"/>
        <end position="127"/>
    </location>
</feature>
<feature type="compositionally biased region" description="Low complexity" evidence="5">
    <location>
        <begin position="128"/>
        <end position="139"/>
    </location>
</feature>
<feature type="compositionally biased region" description="Basic and acidic residues" evidence="5">
    <location>
        <begin position="143"/>
        <end position="169"/>
    </location>
</feature>
<feature type="binding site" evidence="4">
    <location>
        <begin position="248"/>
        <end position="255"/>
    </location>
    <ligand>
        <name>ATP</name>
        <dbReference type="ChEBI" id="CHEBI:30616"/>
    </ligand>
</feature>
<feature type="modified residue" description="N-acetylmethionine" evidence="3">
    <location>
        <position position="1"/>
    </location>
</feature>
<feature type="modified residue" description="Phosphoserine" evidence="1">
    <location>
        <position position="174"/>
    </location>
</feature>
<reference key="1">
    <citation type="submission" date="2007-12" db="EMBL/GenBank/DDBJ databases">
        <title>NISC comparative sequencing initiative.</title>
        <authorList>
            <person name="Antonellis A."/>
            <person name="Benjamin B."/>
            <person name="Blakesley R.W."/>
            <person name="Bouffard G.G."/>
            <person name="Brinkley C."/>
            <person name="Brooks S."/>
            <person name="Chu G."/>
            <person name="Chub I."/>
            <person name="Coleman H."/>
            <person name="Fuksenko T."/>
            <person name="Gestole M."/>
            <person name="Gregory M."/>
            <person name="Guan X."/>
            <person name="Gupta J."/>
            <person name="Gurson N."/>
            <person name="Han E."/>
            <person name="Han J."/>
            <person name="Hansen N."/>
            <person name="Hargrove A."/>
            <person name="Hines-Harris K."/>
            <person name="Ho S.-L."/>
            <person name="Hu P."/>
            <person name="Hunter G."/>
            <person name="Hurle B."/>
            <person name="Idol J.R."/>
            <person name="Johnson T."/>
            <person name="Knight E."/>
            <person name="Kwong P."/>
            <person name="Lee-Lin S.-Q."/>
            <person name="Legaspi R."/>
            <person name="Madden M."/>
            <person name="Maduro Q.L."/>
            <person name="Maduro V.B."/>
            <person name="Margulies E.H."/>
            <person name="Masiello C."/>
            <person name="Maskeri B."/>
            <person name="McDowell J."/>
            <person name="Merkulov G."/>
            <person name="Montemayor C."/>
            <person name="Mullikin J.C."/>
            <person name="Park M."/>
            <person name="Prasad A."/>
            <person name="Ramsahoye C."/>
            <person name="Reddix-Dugue N."/>
            <person name="Riebow N."/>
            <person name="Schandler K."/>
            <person name="Schueler M.G."/>
            <person name="Sison C."/>
            <person name="Smith L."/>
            <person name="Stantripop S."/>
            <person name="Thomas J.W."/>
            <person name="Thomas P.J."/>
            <person name="Tsipouri V."/>
            <person name="Young A."/>
            <person name="Green E.D."/>
        </authorList>
    </citation>
    <scope>NUCLEOTIDE SEQUENCE [LARGE SCALE GENOMIC DNA]</scope>
</reference>
<sequence length="490" mass="55312">MNLAEICDNAKKGREYALLGNYDSSMVYYQGVIQQIQRHCQSVRDPAIKGKWQQVRQELLEEYEQVKSIVSTLESFKIDRPPDFPVSCQDEPFRDPAVWPPPVPAEHRAPPQIRRPNREVRPLRKEMAGVGARGPVGRAHPISKSEKPSTSRDKDCRARGRDDKGRKNMQDGASDGEMPKFDGAGYDKDLVEALERDIVSRNPSIHWDDIADLEEAKKLLREAVVLPMWMPDFFKGIRRPWKGVLMVGPPGTGKTMLAKAVATECGTTFFNVSSSTLTSKYRGESEKLVRLLFEMARFYAPTTIFIDEIDSICSRRGTSDEHEASRRVKSELLIQMDGVGGALENDDPSKMVMVLAATNFPWDIDEALRRRLEKRIYIPLPTAKGRAELLKINLREVELDPDIQLEDIAEKIEGYSGADITNVCRDASLMAMRRRINGLGPEEIRALSKEELQMPVTKGDFELALKKIAKSVSAADLEKYEKWMVEFGSA</sequence>